<reference key="1">
    <citation type="journal article" date="2008" name="BMC Genomics">
        <title>The genome sequence of the fish pathogen Aliivibrio salmonicida strain LFI1238 shows extensive evidence of gene decay.</title>
        <authorList>
            <person name="Hjerde E."/>
            <person name="Lorentzen M.S."/>
            <person name="Holden M.T."/>
            <person name="Seeger K."/>
            <person name="Paulsen S."/>
            <person name="Bason N."/>
            <person name="Churcher C."/>
            <person name="Harris D."/>
            <person name="Norbertczak H."/>
            <person name="Quail M.A."/>
            <person name="Sanders S."/>
            <person name="Thurston S."/>
            <person name="Parkhill J."/>
            <person name="Willassen N.P."/>
            <person name="Thomson N.R."/>
        </authorList>
    </citation>
    <scope>NUCLEOTIDE SEQUENCE [LARGE SCALE GENOMIC DNA]</scope>
    <source>
        <strain>LFI1238</strain>
    </source>
</reference>
<protein>
    <recommendedName>
        <fullName evidence="1">RNA chaperone ProQ</fullName>
    </recommendedName>
</protein>
<keyword id="KW-0143">Chaperone</keyword>
<keyword id="KW-0963">Cytoplasm</keyword>
<keyword id="KW-0694">RNA-binding</keyword>
<proteinExistence type="inferred from homology"/>
<evidence type="ECO:0000255" key="1">
    <source>
        <dbReference type="HAMAP-Rule" id="MF_00749"/>
    </source>
</evidence>
<evidence type="ECO:0000256" key="2">
    <source>
        <dbReference type="SAM" id="MobiDB-lite"/>
    </source>
</evidence>
<accession>B6ELC5</accession>
<organism>
    <name type="scientific">Aliivibrio salmonicida (strain LFI1238)</name>
    <name type="common">Vibrio salmonicida (strain LFI1238)</name>
    <dbReference type="NCBI Taxonomy" id="316275"/>
    <lineage>
        <taxon>Bacteria</taxon>
        <taxon>Pseudomonadati</taxon>
        <taxon>Pseudomonadota</taxon>
        <taxon>Gammaproteobacteria</taxon>
        <taxon>Vibrionales</taxon>
        <taxon>Vibrionaceae</taxon>
        <taxon>Aliivibrio</taxon>
    </lineage>
</organism>
<dbReference type="EMBL" id="FM178379">
    <property type="protein sequence ID" value="CAQ79228.1"/>
    <property type="molecule type" value="Genomic_DNA"/>
</dbReference>
<dbReference type="RefSeq" id="WP_012550195.1">
    <property type="nucleotide sequence ID" value="NC_011312.1"/>
</dbReference>
<dbReference type="SMR" id="B6ELC5"/>
<dbReference type="KEGG" id="vsa:VSAL_I1543"/>
<dbReference type="eggNOG" id="COG3109">
    <property type="taxonomic scope" value="Bacteria"/>
</dbReference>
<dbReference type="HOGENOM" id="CLU_113254_0_0_6"/>
<dbReference type="Proteomes" id="UP000001730">
    <property type="component" value="Chromosome 1"/>
</dbReference>
<dbReference type="GO" id="GO:0005829">
    <property type="term" value="C:cytosol"/>
    <property type="evidence" value="ECO:0007669"/>
    <property type="project" value="TreeGrafter"/>
</dbReference>
<dbReference type="GO" id="GO:0033592">
    <property type="term" value="F:RNA strand annealing activity"/>
    <property type="evidence" value="ECO:0007669"/>
    <property type="project" value="UniProtKB-UniRule"/>
</dbReference>
<dbReference type="GO" id="GO:0034057">
    <property type="term" value="F:RNA strand-exchange activity"/>
    <property type="evidence" value="ECO:0007669"/>
    <property type="project" value="UniProtKB-UniRule"/>
</dbReference>
<dbReference type="GO" id="GO:0010608">
    <property type="term" value="P:post-transcriptional regulation of gene expression"/>
    <property type="evidence" value="ECO:0007669"/>
    <property type="project" value="InterPro"/>
</dbReference>
<dbReference type="FunFam" id="1.10.1710.10:FF:000001">
    <property type="entry name" value="RNA chaperone ProQ"/>
    <property type="match status" value="1"/>
</dbReference>
<dbReference type="Gene3D" id="1.10.1710.10">
    <property type="entry name" value="ProQ/FinO domain"/>
    <property type="match status" value="1"/>
</dbReference>
<dbReference type="HAMAP" id="MF_00749">
    <property type="entry name" value="ProQ"/>
    <property type="match status" value="1"/>
</dbReference>
<dbReference type="InterPro" id="IPR023529">
    <property type="entry name" value="ProQ"/>
</dbReference>
<dbReference type="InterPro" id="IPR016103">
    <property type="entry name" value="ProQ/FinO"/>
</dbReference>
<dbReference type="InterPro" id="IPR036442">
    <property type="entry name" value="ProQ/FinO_sf"/>
</dbReference>
<dbReference type="InterPro" id="IPR035236">
    <property type="entry name" value="ProQ_C"/>
</dbReference>
<dbReference type="NCBIfam" id="NF003434">
    <property type="entry name" value="PRK04950.1"/>
    <property type="match status" value="1"/>
</dbReference>
<dbReference type="PANTHER" id="PTHR38106">
    <property type="entry name" value="RNA CHAPERONE PROQ"/>
    <property type="match status" value="1"/>
</dbReference>
<dbReference type="PANTHER" id="PTHR38106:SF1">
    <property type="entry name" value="RNA CHAPERONE PROQ"/>
    <property type="match status" value="1"/>
</dbReference>
<dbReference type="Pfam" id="PF04352">
    <property type="entry name" value="ProQ"/>
    <property type="match status" value="1"/>
</dbReference>
<dbReference type="Pfam" id="PF17516">
    <property type="entry name" value="ProQ_C"/>
    <property type="match status" value="1"/>
</dbReference>
<dbReference type="SMART" id="SM00945">
    <property type="entry name" value="ProQ"/>
    <property type="match status" value="1"/>
</dbReference>
<dbReference type="SUPFAM" id="SSF48657">
    <property type="entry name" value="FinO-like"/>
    <property type="match status" value="1"/>
</dbReference>
<feature type="chain" id="PRO_1000192657" description="RNA chaperone ProQ">
    <location>
        <begin position="1"/>
        <end position="210"/>
    </location>
</feature>
<feature type="region of interest" description="Disordered" evidence="2">
    <location>
        <begin position="98"/>
        <end position="155"/>
    </location>
</feature>
<feature type="compositionally biased region" description="Basic and acidic residues" evidence="2">
    <location>
        <begin position="98"/>
        <end position="127"/>
    </location>
</feature>
<sequence length="210" mass="23298">MENSEKLANSKEVIAYIAERFPKCFILEGEAKPLKIGIFQDLAERLSDDSKVSKTQLRAGLRQYTSSWRYLHGVKPGASRVDLDGNPCGELEEEHVEHAKASLEESKAKVAARRKEQAKKAREEAKAKKPARATTPPKRRPQPAAVAKKQEKPVETRALNSDEITVGNNVSVNMGKGNMPATIVEINKDDVRIRLSNGLQMVVKAENLRS</sequence>
<gene>
    <name evidence="1" type="primary">proQ</name>
    <name type="ordered locus">VSAL_I1543</name>
</gene>
<comment type="function">
    <text evidence="1">RNA chaperone with significant RNA binding, RNA strand exchange and RNA duplexing activities.</text>
</comment>
<comment type="subcellular location">
    <subcellularLocation>
        <location evidence="1">Cytoplasm</location>
    </subcellularLocation>
</comment>
<comment type="similarity">
    <text evidence="1">Belongs to the ProQ family.</text>
</comment>
<name>PROQ_ALISL</name>